<protein>
    <recommendedName>
        <fullName>Iron-sulfur cluster assembly factor IBA57 homolog, mitochondrial</fullName>
    </recommendedName>
</protein>
<sequence length="462" mass="51710">MRFNSSIIVRRLTKVTTSNSAHEAPQFLSCRLPGKAFISVRGPDAVKFLNGLITAKLAPEVVKKSLTTVNPDVREVERHPSISGFDLRRGNWGIYKEGTRARGPYISRFGTYSAFLNSKGKVLTDTVVYPAPLGLPDGAAAKYPEYLLQCDAIFVEPLEHLLQRHKLLQRVKIARRDDLSVWHVAIDMDAYPEWEQSFSWRSEFWKPMVSLHNQDDALRFARWFIAQFFAGAEGRLVGAYYDTRNVDPTKKSNIFYMVTTGDVDDIATLFSPQMVSSKTTAVSVPYTEVRRARLRRGVLEGVSELRSEAVLPLEVNFDLYEDAVSFDKGCYVGQELTARTHATGVLRKRCAPVIVSNSASLDTLATSSRLDLYTDYVIPAASTSPSPTNSPFASQNPRPRKKQPIGKLLCVDGTDGVALVKLIYIERSRSCGSIECYVTHPETGERVPIYIDLQNRPIHLPE</sequence>
<proteinExistence type="inferred from homology"/>
<name>CAF17_EREGS</name>
<accession>Q75D53</accession>
<keyword id="KW-0496">Mitochondrion</keyword>
<keyword id="KW-1185">Reference proteome</keyword>
<keyword id="KW-0809">Transit peptide</keyword>
<dbReference type="EMBL" id="AE016815">
    <property type="protein sequence ID" value="AAS50942.1"/>
    <property type="molecule type" value="Genomic_DNA"/>
</dbReference>
<dbReference type="RefSeq" id="NP_983118.1">
    <property type="nucleotide sequence ID" value="NM_208471.1"/>
</dbReference>
<dbReference type="SMR" id="Q75D53"/>
<dbReference type="FunCoup" id="Q75D53">
    <property type="interactions" value="322"/>
</dbReference>
<dbReference type="STRING" id="284811.Q75D53"/>
<dbReference type="EnsemblFungi" id="AAS50942">
    <property type="protein sequence ID" value="AAS50942"/>
    <property type="gene ID" value="AGOS_ABR170W"/>
</dbReference>
<dbReference type="GeneID" id="4619228"/>
<dbReference type="KEGG" id="ago:AGOS_ABR170W"/>
<dbReference type="eggNOG" id="KOG2929">
    <property type="taxonomic scope" value="Eukaryota"/>
</dbReference>
<dbReference type="HOGENOM" id="CLU_007884_7_3_1"/>
<dbReference type="InParanoid" id="Q75D53"/>
<dbReference type="OMA" id="PFECNLD"/>
<dbReference type="OrthoDB" id="191995at2759"/>
<dbReference type="Proteomes" id="UP000000591">
    <property type="component" value="Chromosome II"/>
</dbReference>
<dbReference type="GO" id="GO:0005759">
    <property type="term" value="C:mitochondrial matrix"/>
    <property type="evidence" value="ECO:0000318"/>
    <property type="project" value="GO_Central"/>
</dbReference>
<dbReference type="GO" id="GO:0016740">
    <property type="term" value="F:transferase activity"/>
    <property type="evidence" value="ECO:0007669"/>
    <property type="project" value="UniProtKB-KW"/>
</dbReference>
<dbReference type="GO" id="GO:0016226">
    <property type="term" value="P:iron-sulfur cluster assembly"/>
    <property type="evidence" value="ECO:0000318"/>
    <property type="project" value="GO_Central"/>
</dbReference>
<dbReference type="GO" id="GO:0051604">
    <property type="term" value="P:protein maturation"/>
    <property type="evidence" value="ECO:0007669"/>
    <property type="project" value="EnsemblFungi"/>
</dbReference>
<dbReference type="Gene3D" id="3.30.1360.120">
    <property type="entry name" value="Probable tRNA modification gtpase trme, domain 1"/>
    <property type="match status" value="2"/>
</dbReference>
<dbReference type="InterPro" id="IPR027266">
    <property type="entry name" value="TrmE/GcvT_dom1"/>
</dbReference>
<dbReference type="InterPro" id="IPR045179">
    <property type="entry name" value="YgfZ/GcvT"/>
</dbReference>
<dbReference type="InterPro" id="IPR017703">
    <property type="entry name" value="YgfZ/GcvT_CS"/>
</dbReference>
<dbReference type="NCBIfam" id="TIGR03317">
    <property type="entry name" value="ygfZ_signature"/>
    <property type="match status" value="1"/>
</dbReference>
<dbReference type="PANTHER" id="PTHR22602">
    <property type="entry name" value="TRANSFERASE CAF17, MITOCHONDRIAL-RELATED"/>
    <property type="match status" value="1"/>
</dbReference>
<dbReference type="PANTHER" id="PTHR22602:SF0">
    <property type="entry name" value="TRANSFERASE CAF17, MITOCHONDRIAL-RELATED"/>
    <property type="match status" value="1"/>
</dbReference>
<dbReference type="SUPFAM" id="SSF103025">
    <property type="entry name" value="Folate-binding domain"/>
    <property type="match status" value="1"/>
</dbReference>
<organism>
    <name type="scientific">Eremothecium gossypii (strain ATCC 10895 / CBS 109.51 / FGSC 9923 / NRRL Y-1056)</name>
    <name type="common">Yeast</name>
    <name type="synonym">Ashbya gossypii</name>
    <dbReference type="NCBI Taxonomy" id="284811"/>
    <lineage>
        <taxon>Eukaryota</taxon>
        <taxon>Fungi</taxon>
        <taxon>Dikarya</taxon>
        <taxon>Ascomycota</taxon>
        <taxon>Saccharomycotina</taxon>
        <taxon>Saccharomycetes</taxon>
        <taxon>Saccharomycetales</taxon>
        <taxon>Saccharomycetaceae</taxon>
        <taxon>Eremothecium</taxon>
    </lineage>
</organism>
<feature type="transit peptide" description="Mitochondrion" evidence="2">
    <location>
        <begin position="1"/>
        <end position="11"/>
    </location>
</feature>
<feature type="chain" id="PRO_0000301689" description="Iron-sulfur cluster assembly factor IBA57 homolog, mitochondrial">
    <location>
        <begin position="12"/>
        <end position="462"/>
    </location>
</feature>
<feature type="region of interest" description="Disordered" evidence="3">
    <location>
        <begin position="382"/>
        <end position="405"/>
    </location>
</feature>
<feature type="compositionally biased region" description="Low complexity" evidence="3">
    <location>
        <begin position="382"/>
        <end position="394"/>
    </location>
</feature>
<gene>
    <name type="primary">CAF17</name>
    <name type="ordered locus">ABR170W</name>
</gene>
<reference key="1">
    <citation type="journal article" date="2004" name="Science">
        <title>The Ashbya gossypii genome as a tool for mapping the ancient Saccharomyces cerevisiae genome.</title>
        <authorList>
            <person name="Dietrich F.S."/>
            <person name="Voegeli S."/>
            <person name="Brachat S."/>
            <person name="Lerch A."/>
            <person name="Gates K."/>
            <person name="Steiner S."/>
            <person name="Mohr C."/>
            <person name="Poehlmann R."/>
            <person name="Luedi P."/>
            <person name="Choi S."/>
            <person name="Wing R.A."/>
            <person name="Flavier A."/>
            <person name="Gaffney T.D."/>
            <person name="Philippsen P."/>
        </authorList>
    </citation>
    <scope>NUCLEOTIDE SEQUENCE [LARGE SCALE GENOMIC DNA]</scope>
    <source>
        <strain>ATCC 10895 / CBS 109.51 / FGSC 9923 / NRRL Y-1056</strain>
    </source>
</reference>
<reference key="2">
    <citation type="journal article" date="2013" name="G3 (Bethesda)">
        <title>Genomes of Ashbya fungi isolated from insects reveal four mating-type loci, numerous translocations, lack of transposons, and distinct gene duplications.</title>
        <authorList>
            <person name="Dietrich F.S."/>
            <person name="Voegeli S."/>
            <person name="Kuo S."/>
            <person name="Philippsen P."/>
        </authorList>
    </citation>
    <scope>GENOME REANNOTATION</scope>
    <source>
        <strain>ATCC 10895 / CBS 109.51 / FGSC 9923 / NRRL Y-1056</strain>
    </source>
</reference>
<evidence type="ECO:0000250" key="1">
    <source>
        <dbReference type="UniProtKB" id="P47158"/>
    </source>
</evidence>
<evidence type="ECO:0000255" key="2"/>
<evidence type="ECO:0000256" key="3">
    <source>
        <dbReference type="SAM" id="MobiDB-lite"/>
    </source>
</evidence>
<evidence type="ECO:0000305" key="4"/>
<comment type="subcellular location">
    <subcellularLocation>
        <location evidence="1">Mitochondrion matrix</location>
    </subcellularLocation>
</comment>
<comment type="similarity">
    <text evidence="4">Belongs to the GcvT family. CAF17/IBA57 subfamily.</text>
</comment>